<protein>
    <recommendedName>
        <fullName evidence="1">Phosphoribosylaminoimidazole-succinocarboxamide synthase</fullName>
        <ecNumber evidence="1">6.3.2.6</ecNumber>
    </recommendedName>
    <alternativeName>
        <fullName evidence="1">SAICAR synthetase</fullName>
    </alternativeName>
</protein>
<sequence length="367" mass="41057">MSLANQVLAVNDDLPIRTHKPVHSGKVRSVYWLTEEDSARLIKEKGYDVAPDAPLAIMVISDRISAFDCIWHGEGGLKGVPGKGAALNAISNHWFKLFKDNGLADSHILDIPHPFVWIVQKAKPVKIEAICRKYITGSMWRAYANGEREFCGIQLPEGLEKDKALPNLLMTPSTKGILKGIPGVPEADDVNITRQNIVDNYEAFNFSSAEDIAQYEKLLKEGFNVISQALEGIDQIFVDTKFEFGYVHDAAGNEKLIYMDEVGTPDSSRIWDAKEYQAGNIVENSKEGFRQFLLNHFPDPDILLNKERMPEREALARDNDLPVESLMDISRTYIGIAEKITGKPITLSENPKAEIIEILSKEYGLID</sequence>
<organism>
    <name type="scientific">Vibrio parahaemolyticus serotype O3:K6 (strain RIMD 2210633)</name>
    <dbReference type="NCBI Taxonomy" id="223926"/>
    <lineage>
        <taxon>Bacteria</taxon>
        <taxon>Pseudomonadati</taxon>
        <taxon>Pseudomonadota</taxon>
        <taxon>Gammaproteobacteria</taxon>
        <taxon>Vibrionales</taxon>
        <taxon>Vibrionaceae</taxon>
        <taxon>Vibrio</taxon>
    </lineage>
</organism>
<reference key="1">
    <citation type="journal article" date="2003" name="Lancet">
        <title>Genome sequence of Vibrio parahaemolyticus: a pathogenic mechanism distinct from that of V. cholerae.</title>
        <authorList>
            <person name="Makino K."/>
            <person name="Oshima K."/>
            <person name="Kurokawa K."/>
            <person name="Yokoyama K."/>
            <person name="Uda T."/>
            <person name="Tagomori K."/>
            <person name="Iijima Y."/>
            <person name="Najima M."/>
            <person name="Nakano M."/>
            <person name="Yamashita A."/>
            <person name="Kubota Y."/>
            <person name="Kimura S."/>
            <person name="Yasunaga T."/>
            <person name="Honda T."/>
            <person name="Shinagawa H."/>
            <person name="Hattori M."/>
            <person name="Iida T."/>
        </authorList>
    </citation>
    <scope>NUCLEOTIDE SEQUENCE [LARGE SCALE GENOMIC DNA]</scope>
    <source>
        <strain>RIMD 2210633</strain>
    </source>
</reference>
<keyword id="KW-0067">ATP-binding</keyword>
<keyword id="KW-0436">Ligase</keyword>
<keyword id="KW-0547">Nucleotide-binding</keyword>
<keyword id="KW-0658">Purine biosynthesis</keyword>
<proteinExistence type="inferred from homology"/>
<gene>
    <name evidence="1" type="primary">purC</name>
    <name type="ordered locus">VP1263</name>
</gene>
<name>PUR7_VIBPA</name>
<evidence type="ECO:0000255" key="1">
    <source>
        <dbReference type="HAMAP-Rule" id="MF_00137"/>
    </source>
</evidence>
<feature type="chain" id="PRO_0000100896" description="Phosphoribosylaminoimidazole-succinocarboxamide synthase">
    <location>
        <begin position="1"/>
        <end position="367"/>
    </location>
</feature>
<dbReference type="EC" id="6.3.2.6" evidence="1"/>
<dbReference type="EMBL" id="BA000031">
    <property type="protein sequence ID" value="BAC59526.1"/>
    <property type="molecule type" value="Genomic_DNA"/>
</dbReference>
<dbReference type="RefSeq" id="NP_797642.1">
    <property type="nucleotide sequence ID" value="NC_004603.1"/>
</dbReference>
<dbReference type="RefSeq" id="WP_005462603.1">
    <property type="nucleotide sequence ID" value="NC_004603.1"/>
</dbReference>
<dbReference type="SMR" id="Q87Q87"/>
<dbReference type="DNASU" id="1188768"/>
<dbReference type="GeneID" id="1188768"/>
<dbReference type="KEGG" id="vpa:VP1263"/>
<dbReference type="PATRIC" id="fig|223926.6.peg.1203"/>
<dbReference type="eggNOG" id="COG0152">
    <property type="taxonomic scope" value="Bacteria"/>
</dbReference>
<dbReference type="HOGENOM" id="CLU_064197_0_0_6"/>
<dbReference type="UniPathway" id="UPA00074">
    <property type="reaction ID" value="UER00131"/>
</dbReference>
<dbReference type="Proteomes" id="UP000002493">
    <property type="component" value="Chromosome 1"/>
</dbReference>
<dbReference type="GO" id="GO:0005737">
    <property type="term" value="C:cytoplasm"/>
    <property type="evidence" value="ECO:0007669"/>
    <property type="project" value="TreeGrafter"/>
</dbReference>
<dbReference type="GO" id="GO:0005524">
    <property type="term" value="F:ATP binding"/>
    <property type="evidence" value="ECO:0007669"/>
    <property type="project" value="UniProtKB-KW"/>
</dbReference>
<dbReference type="GO" id="GO:0004639">
    <property type="term" value="F:phosphoribosylaminoimidazolesuccinocarboxamide synthase activity"/>
    <property type="evidence" value="ECO:0007669"/>
    <property type="project" value="UniProtKB-UniRule"/>
</dbReference>
<dbReference type="GO" id="GO:0006189">
    <property type="term" value="P:'de novo' IMP biosynthetic process"/>
    <property type="evidence" value="ECO:0007669"/>
    <property type="project" value="UniProtKB-UniRule"/>
</dbReference>
<dbReference type="CDD" id="cd01414">
    <property type="entry name" value="SAICAR_synt_Sc"/>
    <property type="match status" value="1"/>
</dbReference>
<dbReference type="Gene3D" id="3.30.470.20">
    <property type="entry name" value="ATP-grasp fold, B domain"/>
    <property type="match status" value="1"/>
</dbReference>
<dbReference type="Gene3D" id="3.30.200.20">
    <property type="entry name" value="Phosphorylase Kinase, domain 1"/>
    <property type="match status" value="1"/>
</dbReference>
<dbReference type="HAMAP" id="MF_00137">
    <property type="entry name" value="SAICAR_synth"/>
    <property type="match status" value="1"/>
</dbReference>
<dbReference type="InterPro" id="IPR028923">
    <property type="entry name" value="SAICAR_synt/ADE2_N"/>
</dbReference>
<dbReference type="InterPro" id="IPR014106">
    <property type="entry name" value="SAICAR_synthase_Vibrio-typ"/>
</dbReference>
<dbReference type="InterPro" id="IPR018236">
    <property type="entry name" value="SAICAR_synthetase_CS"/>
</dbReference>
<dbReference type="NCBIfam" id="NF010567">
    <property type="entry name" value="PRK13960.1"/>
    <property type="match status" value="1"/>
</dbReference>
<dbReference type="NCBIfam" id="TIGR02735">
    <property type="entry name" value="purC_vibrio"/>
    <property type="match status" value="1"/>
</dbReference>
<dbReference type="PANTHER" id="PTHR43700">
    <property type="entry name" value="PHOSPHORIBOSYLAMINOIMIDAZOLE-SUCCINOCARBOXAMIDE SYNTHASE"/>
    <property type="match status" value="1"/>
</dbReference>
<dbReference type="PANTHER" id="PTHR43700:SF1">
    <property type="entry name" value="PHOSPHORIBOSYLAMINOIMIDAZOLE-SUCCINOCARBOXAMIDE SYNTHASE"/>
    <property type="match status" value="1"/>
</dbReference>
<dbReference type="Pfam" id="PF01259">
    <property type="entry name" value="SAICAR_synt"/>
    <property type="match status" value="1"/>
</dbReference>
<dbReference type="SUPFAM" id="SSF56104">
    <property type="entry name" value="SAICAR synthase-like"/>
    <property type="match status" value="1"/>
</dbReference>
<dbReference type="PROSITE" id="PS01057">
    <property type="entry name" value="SAICAR_SYNTHETASE_1"/>
    <property type="match status" value="1"/>
</dbReference>
<comment type="catalytic activity">
    <reaction evidence="1">
        <text>5-amino-1-(5-phospho-D-ribosyl)imidazole-4-carboxylate + L-aspartate + ATP = (2S)-2-[5-amino-1-(5-phospho-beta-D-ribosyl)imidazole-4-carboxamido]succinate + ADP + phosphate + 2 H(+)</text>
        <dbReference type="Rhea" id="RHEA:22628"/>
        <dbReference type="ChEBI" id="CHEBI:15378"/>
        <dbReference type="ChEBI" id="CHEBI:29991"/>
        <dbReference type="ChEBI" id="CHEBI:30616"/>
        <dbReference type="ChEBI" id="CHEBI:43474"/>
        <dbReference type="ChEBI" id="CHEBI:58443"/>
        <dbReference type="ChEBI" id="CHEBI:77657"/>
        <dbReference type="ChEBI" id="CHEBI:456216"/>
        <dbReference type="EC" id="6.3.2.6"/>
    </reaction>
</comment>
<comment type="pathway">
    <text evidence="1">Purine metabolism; IMP biosynthesis via de novo pathway; 5-amino-1-(5-phospho-D-ribosyl)imidazole-4-carboxamide from 5-amino-1-(5-phospho-D-ribosyl)imidazole-4-carboxylate: step 1/2.</text>
</comment>
<comment type="similarity">
    <text evidence="1">Belongs to the SAICAR synthetase family.</text>
</comment>
<accession>Q87Q87</accession>